<gene>
    <name type="primary">Ipo4</name>
    <name type="synonym">Imp4a</name>
    <name type="synonym">Ranbp4</name>
</gene>
<protein>
    <recommendedName>
        <fullName evidence="3">Importin-4</fullName>
        <shortName evidence="3">Imp4</shortName>
    </recommendedName>
    <alternativeName>
        <fullName evidence="3">Importin-4a</fullName>
        <shortName evidence="3">Imp4a</shortName>
    </alternativeName>
    <alternativeName>
        <fullName>Ran-binding protein 4</fullName>
        <shortName>RanBP4</shortName>
    </alternativeName>
</protein>
<keyword id="KW-0007">Acetylation</keyword>
<keyword id="KW-0963">Cytoplasm</keyword>
<keyword id="KW-0539">Nucleus</keyword>
<keyword id="KW-0653">Protein transport</keyword>
<keyword id="KW-1185">Reference proteome</keyword>
<keyword id="KW-0677">Repeat</keyword>
<keyword id="KW-0813">Transport</keyword>
<name>IPO4_MOUSE</name>
<reference key="1">
    <citation type="journal article" date="2002" name="EMBO J.">
        <title>Importins fulfill a dual function as nuclear import receptors and cytoplasmic chaperones for exposed basic domains.</title>
        <authorList>
            <person name="Jaekel S."/>
            <person name="Mingot J.-M."/>
            <person name="Schwarzmaier P."/>
            <person name="Hartmann E."/>
            <person name="Goerlich D."/>
        </authorList>
    </citation>
    <scope>NUCLEOTIDE SEQUENCE [MRNA]</scope>
    <scope>FUNCTION</scope>
    <scope>INTERACTION WITH RPS3A</scope>
</reference>
<reference key="2">
    <citation type="journal article" date="2005" name="Science">
        <title>The transcriptional landscape of the mammalian genome.</title>
        <authorList>
            <person name="Carninci P."/>
            <person name="Kasukawa T."/>
            <person name="Katayama S."/>
            <person name="Gough J."/>
            <person name="Frith M.C."/>
            <person name="Maeda N."/>
            <person name="Oyama R."/>
            <person name="Ravasi T."/>
            <person name="Lenhard B."/>
            <person name="Wells C."/>
            <person name="Kodzius R."/>
            <person name="Shimokawa K."/>
            <person name="Bajic V.B."/>
            <person name="Brenner S.E."/>
            <person name="Batalov S."/>
            <person name="Forrest A.R."/>
            <person name="Zavolan M."/>
            <person name="Davis M.J."/>
            <person name="Wilming L.G."/>
            <person name="Aidinis V."/>
            <person name="Allen J.E."/>
            <person name="Ambesi-Impiombato A."/>
            <person name="Apweiler R."/>
            <person name="Aturaliya R.N."/>
            <person name="Bailey T.L."/>
            <person name="Bansal M."/>
            <person name="Baxter L."/>
            <person name="Beisel K.W."/>
            <person name="Bersano T."/>
            <person name="Bono H."/>
            <person name="Chalk A.M."/>
            <person name="Chiu K.P."/>
            <person name="Choudhary V."/>
            <person name="Christoffels A."/>
            <person name="Clutterbuck D.R."/>
            <person name="Crowe M.L."/>
            <person name="Dalla E."/>
            <person name="Dalrymple B.P."/>
            <person name="de Bono B."/>
            <person name="Della Gatta G."/>
            <person name="di Bernardo D."/>
            <person name="Down T."/>
            <person name="Engstrom P."/>
            <person name="Fagiolini M."/>
            <person name="Faulkner G."/>
            <person name="Fletcher C.F."/>
            <person name="Fukushima T."/>
            <person name="Furuno M."/>
            <person name="Futaki S."/>
            <person name="Gariboldi M."/>
            <person name="Georgii-Hemming P."/>
            <person name="Gingeras T.R."/>
            <person name="Gojobori T."/>
            <person name="Green R.E."/>
            <person name="Gustincich S."/>
            <person name="Harbers M."/>
            <person name="Hayashi Y."/>
            <person name="Hensch T.K."/>
            <person name="Hirokawa N."/>
            <person name="Hill D."/>
            <person name="Huminiecki L."/>
            <person name="Iacono M."/>
            <person name="Ikeo K."/>
            <person name="Iwama A."/>
            <person name="Ishikawa T."/>
            <person name="Jakt M."/>
            <person name="Kanapin A."/>
            <person name="Katoh M."/>
            <person name="Kawasawa Y."/>
            <person name="Kelso J."/>
            <person name="Kitamura H."/>
            <person name="Kitano H."/>
            <person name="Kollias G."/>
            <person name="Krishnan S.P."/>
            <person name="Kruger A."/>
            <person name="Kummerfeld S.K."/>
            <person name="Kurochkin I.V."/>
            <person name="Lareau L.F."/>
            <person name="Lazarevic D."/>
            <person name="Lipovich L."/>
            <person name="Liu J."/>
            <person name="Liuni S."/>
            <person name="McWilliam S."/>
            <person name="Madan Babu M."/>
            <person name="Madera M."/>
            <person name="Marchionni L."/>
            <person name="Matsuda H."/>
            <person name="Matsuzawa S."/>
            <person name="Miki H."/>
            <person name="Mignone F."/>
            <person name="Miyake S."/>
            <person name="Morris K."/>
            <person name="Mottagui-Tabar S."/>
            <person name="Mulder N."/>
            <person name="Nakano N."/>
            <person name="Nakauchi H."/>
            <person name="Ng P."/>
            <person name="Nilsson R."/>
            <person name="Nishiguchi S."/>
            <person name="Nishikawa S."/>
            <person name="Nori F."/>
            <person name="Ohara O."/>
            <person name="Okazaki Y."/>
            <person name="Orlando V."/>
            <person name="Pang K.C."/>
            <person name="Pavan W.J."/>
            <person name="Pavesi G."/>
            <person name="Pesole G."/>
            <person name="Petrovsky N."/>
            <person name="Piazza S."/>
            <person name="Reed J."/>
            <person name="Reid J.F."/>
            <person name="Ring B.Z."/>
            <person name="Ringwald M."/>
            <person name="Rost B."/>
            <person name="Ruan Y."/>
            <person name="Salzberg S.L."/>
            <person name="Sandelin A."/>
            <person name="Schneider C."/>
            <person name="Schoenbach C."/>
            <person name="Sekiguchi K."/>
            <person name="Semple C.A."/>
            <person name="Seno S."/>
            <person name="Sessa L."/>
            <person name="Sheng Y."/>
            <person name="Shibata Y."/>
            <person name="Shimada H."/>
            <person name="Shimada K."/>
            <person name="Silva D."/>
            <person name="Sinclair B."/>
            <person name="Sperling S."/>
            <person name="Stupka E."/>
            <person name="Sugiura K."/>
            <person name="Sultana R."/>
            <person name="Takenaka Y."/>
            <person name="Taki K."/>
            <person name="Tammoja K."/>
            <person name="Tan S.L."/>
            <person name="Tang S."/>
            <person name="Taylor M.S."/>
            <person name="Tegner J."/>
            <person name="Teichmann S.A."/>
            <person name="Ueda H.R."/>
            <person name="van Nimwegen E."/>
            <person name="Verardo R."/>
            <person name="Wei C.L."/>
            <person name="Yagi K."/>
            <person name="Yamanishi H."/>
            <person name="Zabarovsky E."/>
            <person name="Zhu S."/>
            <person name="Zimmer A."/>
            <person name="Hide W."/>
            <person name="Bult C."/>
            <person name="Grimmond S.M."/>
            <person name="Teasdale R.D."/>
            <person name="Liu E.T."/>
            <person name="Brusic V."/>
            <person name="Quackenbush J."/>
            <person name="Wahlestedt C."/>
            <person name="Mattick J.S."/>
            <person name="Hume D.A."/>
            <person name="Kai C."/>
            <person name="Sasaki D."/>
            <person name="Tomaru Y."/>
            <person name="Fukuda S."/>
            <person name="Kanamori-Katayama M."/>
            <person name="Suzuki M."/>
            <person name="Aoki J."/>
            <person name="Arakawa T."/>
            <person name="Iida J."/>
            <person name="Imamura K."/>
            <person name="Itoh M."/>
            <person name="Kato T."/>
            <person name="Kawaji H."/>
            <person name="Kawagashira N."/>
            <person name="Kawashima T."/>
            <person name="Kojima M."/>
            <person name="Kondo S."/>
            <person name="Konno H."/>
            <person name="Nakano K."/>
            <person name="Ninomiya N."/>
            <person name="Nishio T."/>
            <person name="Okada M."/>
            <person name="Plessy C."/>
            <person name="Shibata K."/>
            <person name="Shiraki T."/>
            <person name="Suzuki S."/>
            <person name="Tagami M."/>
            <person name="Waki K."/>
            <person name="Watahiki A."/>
            <person name="Okamura-Oho Y."/>
            <person name="Suzuki H."/>
            <person name="Kawai J."/>
            <person name="Hayashizaki Y."/>
        </authorList>
    </citation>
    <scope>NUCLEOTIDE SEQUENCE [LARGE SCALE MRNA]</scope>
    <source>
        <strain>C57BL/6J</strain>
        <tissue>Heart</tissue>
        <tissue>Pituitary</tissue>
    </source>
</reference>
<reference key="3">
    <citation type="journal article" date="2004" name="Genome Res.">
        <title>The status, quality, and expansion of the NIH full-length cDNA project: the Mammalian Gene Collection (MGC).</title>
        <authorList>
            <consortium name="The MGC Project Team"/>
        </authorList>
    </citation>
    <scope>NUCLEOTIDE SEQUENCE [LARGE SCALE MRNA] OF 203-1082</scope>
    <source>
        <tissue>Mammary cancer</tissue>
    </source>
</reference>
<reference key="4">
    <citation type="journal article" date="2010" name="Cell">
        <title>A tissue-specific atlas of mouse protein phosphorylation and expression.</title>
        <authorList>
            <person name="Huttlin E.L."/>
            <person name="Jedrychowski M.P."/>
            <person name="Elias J.E."/>
            <person name="Goswami T."/>
            <person name="Rad R."/>
            <person name="Beausoleil S.A."/>
            <person name="Villen J."/>
            <person name="Haas W."/>
            <person name="Sowa M.E."/>
            <person name="Gygi S.P."/>
        </authorList>
    </citation>
    <scope>IDENTIFICATION BY MASS SPECTROMETRY [LARGE SCALE ANALYSIS]</scope>
    <source>
        <tissue>Brain</tissue>
        <tissue>Brown adipose tissue</tissue>
        <tissue>Heart</tissue>
        <tissue>Kidney</tissue>
        <tissue>Liver</tissue>
        <tissue>Lung</tissue>
        <tissue>Pancreas</tissue>
        <tissue>Spleen</tissue>
        <tissue>Testis</tissue>
    </source>
</reference>
<sequence length="1082" mass="119275">MEPAGLEQILKELLLPDTERIRRATEQLQTILRDPAALPALFDLLATATDSQIRQFAAVLTRRRLNNRWRRLAPEQRESLKSLVLTALQKETVHSVSVSLAQLSATIFRKEGLQGWPQFMNLLQHSTHSSHSPEKEVGLLLLSVVVSSQPEAFHAHQHELLQLLNETLSDVSFPGVLFYSLRTLTAIARYVRPDDVSLARMLVPKVVTALRTLIPLDEVKACEALEALDEMLETELPIINPHLSEVLTFCLEVAKNVALGEPLRVRVLCCLTFLVKVKSKALLKNRLVPPLLHALFPLMAAEPPMGQLDPEDQDSDDDDLEIGLMGETPKHFAVQVVDMLALHLPPEKLCPHVMPMLEEALRSEDPYQRKAGFLVLAVLSDGAGDHIRQRLLYPLLQIVCKGLDDPSQIVRNAALFALGQFSENLQPHISSYSEEVMPLLLSYLKSVPMGNTHHLAKACYALENFVENLGPKVQPYLPELMECMLQPLKNPSKARTKELAVSAIGAIATAAQDSLLPYFPTIMDLLREFLLTGHEDFHLVQIQSLETLGVLARALGESMKPLAEECCQLGLGLCIHIDDPDVRRCTYSLFAALSGLMGEGLGPYLPQITTLMLLSLRSTEGIVPQYDGISSFLLFDDDSEAEEEEELMDEDMEEEGDDSEISGYSVENAFFDEKEDTCTALGEISMNTCVAFLPFMDATFDEVYKLLECPHMNVRKSAYEALGQFCCALHKASQRSSSDPSSSPVLQTSLARVMPAYMQAVKVERERPVVMAVLESLTGVLRTCGSLALQPPGRLSELCNVLKAVLQKKTACQDAEEDDDEDDDQAEYDAMLLEHAGEAIPVLAATAGGHAFAPFFATFLPLLLCKTKQSCTVAEKSFAVGTLAESIQGLGTASAQFVSRLFPVLLNNAREADPEVRSNAIFGLGVLAEHGGCPAQDHFPKLLGLLLPLLARERHDRVRDNICGALARVLMASPVGKTEPQVLATLLRALPLKEDMEEWLTIGHLFSFLHQNNPEQVVDVASELLRICSLILPDNRIPPDTKAALLLLLTFLAKQHTDSFHTALGSLPNDKAQELQAMMGLT</sequence>
<evidence type="ECO:0000250" key="1">
    <source>
        <dbReference type="UniProtKB" id="Q8TEX9"/>
    </source>
</evidence>
<evidence type="ECO:0000255" key="2">
    <source>
        <dbReference type="PROSITE-ProRule" id="PRU00115"/>
    </source>
</evidence>
<evidence type="ECO:0000303" key="3">
    <source>
    </source>
</evidence>
<evidence type="ECO:0000305" key="4"/>
<organism>
    <name type="scientific">Mus musculus</name>
    <name type="common">Mouse</name>
    <dbReference type="NCBI Taxonomy" id="10090"/>
    <lineage>
        <taxon>Eukaryota</taxon>
        <taxon>Metazoa</taxon>
        <taxon>Chordata</taxon>
        <taxon>Craniata</taxon>
        <taxon>Vertebrata</taxon>
        <taxon>Euteleostomi</taxon>
        <taxon>Mammalia</taxon>
        <taxon>Eutheria</taxon>
        <taxon>Euarchontoglires</taxon>
        <taxon>Glires</taxon>
        <taxon>Rodentia</taxon>
        <taxon>Myomorpha</taxon>
        <taxon>Muroidea</taxon>
        <taxon>Muridae</taxon>
        <taxon>Murinae</taxon>
        <taxon>Mus</taxon>
        <taxon>Mus</taxon>
    </lineage>
</organism>
<comment type="function">
    <text evidence="1">Nuclear transport receptor that mediates nuclear import of proteins, such as histones, RPS3A, TNP2 and VDR. Serves as receptor for nuclear localization signals (NLS) in cargo substrates. Is thought to mediate docking of the importin/substrate complex to the nuclear pore complex (NPC) through binding to nucleoporin and the complex is subsequently translocated through the pore by an energy requiring, Ran-dependent mechanism. At the nucleoplasmic side of the NPC, Ran binds to the importin, the importin/substrate complex dissociates and importin is re-exported from the nucleus to the cytoplasm where GTP hydrolysis releases Ran. The directionality of nuclear import is thought to be conferred by an asymmetric distribution of the GTP- and GDP-bound forms of Ran between the cytoplasm and nucleus. Mediates the nuclear import of the histone H3-H4 dimer when in complex with ASF1 (ASF1A or ASF1B). Mediates the ligand-independent nuclear import of vitamin D receptor (VDR).</text>
</comment>
<comment type="subunit">
    <text evidence="1">Found in a cytosolic complex with ASF1 (ASF1A or ASF1B) and histones H3 and H4.</text>
</comment>
<comment type="subcellular location">
    <subcellularLocation>
        <location evidence="1">Cytoplasm</location>
    </subcellularLocation>
    <subcellularLocation>
        <location evidence="1">Nucleus</location>
    </subcellularLocation>
</comment>
<comment type="similarity">
    <text evidence="4">Belongs to the importin beta family.</text>
</comment>
<comment type="sequence caution" evidence="4">
    <conflict type="erroneous initiation">
        <sequence resource="EMBL-CDS" id="AAH03469"/>
    </conflict>
    <text>Truncated N-terminus.</text>
</comment>
<comment type="sequence caution" evidence="4">
    <conflict type="erroneous initiation">
        <sequence resource="EMBL-CDS" id="BAC26988"/>
    </conflict>
    <text>Truncated N-terminus.</text>
</comment>
<feature type="chain" id="PRO_0000120749" description="Importin-4">
    <location>
        <begin position="1"/>
        <end position="1082"/>
    </location>
</feature>
<feature type="domain" description="Importin N-terminal" evidence="2">
    <location>
        <begin position="24"/>
        <end position="90"/>
    </location>
</feature>
<feature type="repeat" description="HEAT 1">
    <location>
        <begin position="348"/>
        <end position="385"/>
    </location>
</feature>
<feature type="repeat" description="HEAT 2">
    <location>
        <begin position="390"/>
        <end position="427"/>
    </location>
</feature>
<feature type="repeat" description="HEAT 3">
    <location>
        <begin position="431"/>
        <end position="471"/>
    </location>
</feature>
<feature type="repeat" description="HEAT 4">
    <location>
        <begin position="475"/>
        <end position="513"/>
    </location>
</feature>
<feature type="repeat" description="HEAT 5">
    <location>
        <begin position="896"/>
        <end position="933"/>
    </location>
</feature>
<feature type="repeat" description="HEAT 6">
    <location>
        <begin position="937"/>
        <end position="975"/>
    </location>
</feature>
<feature type="modified residue" description="N-acetylmethionine" evidence="1">
    <location>
        <position position="1"/>
    </location>
</feature>
<accession>Q8VI75</accession>
<accession>Q3TBW0</accession>
<accession>Q99J52</accession>
<dbReference type="EMBL" id="AF123388">
    <property type="protein sequence ID" value="AAL55522.1"/>
    <property type="molecule type" value="mRNA"/>
</dbReference>
<dbReference type="EMBL" id="AK030490">
    <property type="protein sequence ID" value="BAC26988.1"/>
    <property type="status" value="ALT_INIT"/>
    <property type="molecule type" value="mRNA"/>
</dbReference>
<dbReference type="EMBL" id="AK147086">
    <property type="protein sequence ID" value="BAE27666.1"/>
    <property type="molecule type" value="mRNA"/>
</dbReference>
<dbReference type="EMBL" id="AK171031">
    <property type="protein sequence ID" value="BAE42197.1"/>
    <property type="molecule type" value="mRNA"/>
</dbReference>
<dbReference type="EMBL" id="BC003469">
    <property type="protein sequence ID" value="AAH03469.1"/>
    <property type="status" value="ALT_INIT"/>
    <property type="molecule type" value="mRNA"/>
</dbReference>
<dbReference type="CCDS" id="CCDS27121.1"/>
<dbReference type="RefSeq" id="NP_077229.4">
    <property type="nucleotide sequence ID" value="NM_024267.6"/>
</dbReference>
<dbReference type="SMR" id="Q8VI75"/>
<dbReference type="BioGRID" id="217713">
    <property type="interactions" value="5"/>
</dbReference>
<dbReference type="FunCoup" id="Q8VI75">
    <property type="interactions" value="2392"/>
</dbReference>
<dbReference type="IntAct" id="Q8VI75">
    <property type="interactions" value="1"/>
</dbReference>
<dbReference type="STRING" id="10090.ENSMUSP00000036555"/>
<dbReference type="GlyGen" id="Q8VI75">
    <property type="glycosylation" value="3 sites, 1 O-linked glycan (3 sites)"/>
</dbReference>
<dbReference type="iPTMnet" id="Q8VI75"/>
<dbReference type="PhosphoSitePlus" id="Q8VI75"/>
<dbReference type="SwissPalm" id="Q8VI75"/>
<dbReference type="PaxDb" id="10090-ENSMUSP00000036555"/>
<dbReference type="PeptideAtlas" id="Q8VI75"/>
<dbReference type="ProteomicsDB" id="301659"/>
<dbReference type="Pumba" id="Q8VI75"/>
<dbReference type="Antibodypedia" id="47245">
    <property type="antibodies" value="114 antibodies from 22 providers"/>
</dbReference>
<dbReference type="DNASU" id="75751"/>
<dbReference type="Ensembl" id="ENSMUST00000047131.16">
    <property type="protein sequence ID" value="ENSMUSP00000036555.10"/>
    <property type="gene ID" value="ENSMUSG00000002319.17"/>
</dbReference>
<dbReference type="GeneID" id="75751"/>
<dbReference type="KEGG" id="mmu:75751"/>
<dbReference type="UCSC" id="uc007tzp.1">
    <property type="organism name" value="mouse"/>
</dbReference>
<dbReference type="AGR" id="MGI:1923001"/>
<dbReference type="CTD" id="79711"/>
<dbReference type="MGI" id="MGI:1923001">
    <property type="gene designation" value="Ipo4"/>
</dbReference>
<dbReference type="VEuPathDB" id="HostDB:ENSMUSG00000002319"/>
<dbReference type="eggNOG" id="KOG2171">
    <property type="taxonomic scope" value="Eukaryota"/>
</dbReference>
<dbReference type="GeneTree" id="ENSGT00550000075074"/>
<dbReference type="HOGENOM" id="CLU_003794_1_2_1"/>
<dbReference type="InParanoid" id="Q8VI75"/>
<dbReference type="OMA" id="VMPRIRH"/>
<dbReference type="OrthoDB" id="7862313at2759"/>
<dbReference type="PhylomeDB" id="Q8VI75"/>
<dbReference type="TreeFam" id="TF323157"/>
<dbReference type="BioGRID-ORCS" id="75751">
    <property type="hits" value="11 hits in 78 CRISPR screens"/>
</dbReference>
<dbReference type="CD-CODE" id="CE726F99">
    <property type="entry name" value="Postsynaptic density"/>
</dbReference>
<dbReference type="ChiTaRS" id="Ipo4">
    <property type="organism name" value="mouse"/>
</dbReference>
<dbReference type="PRO" id="PR:Q8VI75"/>
<dbReference type="Proteomes" id="UP000000589">
    <property type="component" value="Chromosome 14"/>
</dbReference>
<dbReference type="RNAct" id="Q8VI75">
    <property type="molecule type" value="protein"/>
</dbReference>
<dbReference type="Bgee" id="ENSMUSG00000002319">
    <property type="expression patterns" value="Expressed in internal carotid artery and 259 other cell types or tissues"/>
</dbReference>
<dbReference type="ExpressionAtlas" id="Q8VI75">
    <property type="expression patterns" value="baseline and differential"/>
</dbReference>
<dbReference type="GO" id="GO:0000785">
    <property type="term" value="C:chromatin"/>
    <property type="evidence" value="ECO:0007669"/>
    <property type="project" value="Ensembl"/>
</dbReference>
<dbReference type="GO" id="GO:0005737">
    <property type="term" value="C:cytoplasm"/>
    <property type="evidence" value="ECO:0007669"/>
    <property type="project" value="UniProtKB-SubCell"/>
</dbReference>
<dbReference type="GO" id="GO:0005634">
    <property type="term" value="C:nucleus"/>
    <property type="evidence" value="ECO:0007669"/>
    <property type="project" value="UniProtKB-SubCell"/>
</dbReference>
<dbReference type="GO" id="GO:0032991">
    <property type="term" value="C:protein-containing complex"/>
    <property type="evidence" value="ECO:0007669"/>
    <property type="project" value="Ensembl"/>
</dbReference>
<dbReference type="GO" id="GO:0061608">
    <property type="term" value="F:nuclear import signal receptor activity"/>
    <property type="evidence" value="ECO:0000250"/>
    <property type="project" value="UniProtKB"/>
</dbReference>
<dbReference type="GO" id="GO:0008139">
    <property type="term" value="F:nuclear localization sequence binding"/>
    <property type="evidence" value="ECO:0000250"/>
    <property type="project" value="UniProtKB"/>
</dbReference>
<dbReference type="GO" id="GO:0031267">
    <property type="term" value="F:small GTPase binding"/>
    <property type="evidence" value="ECO:0007669"/>
    <property type="project" value="InterPro"/>
</dbReference>
<dbReference type="GO" id="GO:0006606">
    <property type="term" value="P:protein import into nucleus"/>
    <property type="evidence" value="ECO:0000266"/>
    <property type="project" value="MGI"/>
</dbReference>
<dbReference type="GO" id="GO:0042254">
    <property type="term" value="P:ribosome biogenesis"/>
    <property type="evidence" value="ECO:0000266"/>
    <property type="project" value="MGI"/>
</dbReference>
<dbReference type="Gene3D" id="1.25.10.10">
    <property type="entry name" value="Leucine-rich Repeat Variant"/>
    <property type="match status" value="1"/>
</dbReference>
<dbReference type="InterPro" id="IPR011989">
    <property type="entry name" value="ARM-like"/>
</dbReference>
<dbReference type="InterPro" id="IPR016024">
    <property type="entry name" value="ARM-type_fold"/>
</dbReference>
<dbReference type="InterPro" id="IPR000357">
    <property type="entry name" value="HEAT"/>
</dbReference>
<dbReference type="InterPro" id="IPR001494">
    <property type="entry name" value="Importin-beta_N"/>
</dbReference>
<dbReference type="InterPro" id="IPR040122">
    <property type="entry name" value="Importin_beta"/>
</dbReference>
<dbReference type="PANTHER" id="PTHR10527">
    <property type="entry name" value="IMPORTIN BETA"/>
    <property type="match status" value="1"/>
</dbReference>
<dbReference type="Pfam" id="PF02985">
    <property type="entry name" value="HEAT"/>
    <property type="match status" value="1"/>
</dbReference>
<dbReference type="Pfam" id="PF13513">
    <property type="entry name" value="HEAT_EZ"/>
    <property type="match status" value="1"/>
</dbReference>
<dbReference type="Pfam" id="PF03810">
    <property type="entry name" value="IBN_N"/>
    <property type="match status" value="1"/>
</dbReference>
<dbReference type="SMART" id="SM00913">
    <property type="entry name" value="IBN_N"/>
    <property type="match status" value="1"/>
</dbReference>
<dbReference type="SUPFAM" id="SSF48371">
    <property type="entry name" value="ARM repeat"/>
    <property type="match status" value="2"/>
</dbReference>
<dbReference type="PROSITE" id="PS50166">
    <property type="entry name" value="IMPORTIN_B_NT"/>
    <property type="match status" value="1"/>
</dbReference>
<proteinExistence type="evidence at protein level"/>